<evidence type="ECO:0000255" key="1">
    <source>
        <dbReference type="HAMAP-Rule" id="MF_00388"/>
    </source>
</evidence>
<proteinExistence type="inferred from homology"/>
<sequence>MMKQRTIAAPVKTVGIGLHSGRKVTIVIKPAPINSGVQFVRIDTPEQSVVPATALAVCDTRLASVIQKDGVRVSTVEHLLSACAGLGLDNLLIELDGEEVPIMDGSAASFLFLIESAGIAEQEAPRQFVVIKKAVEVREGDKLARLEPFFGFKLDFTIDFKHPAVDKTGQRFIVDFAEHAYRSEIGRARTFGFAHEVEALREMGLARGGSLDNAIVLDEHRILNNEELRYEDEFVRHKILDAIGDLYLIGHPIVGAYIAEKSGHALNNALLRKLLDDPSTYEISSFAENKAPAAYSQENQPLFF</sequence>
<feature type="chain" id="PRO_1000080223" description="UDP-3-O-acyl-N-acetylglucosamine deacetylase">
    <location>
        <begin position="1"/>
        <end position="304"/>
    </location>
</feature>
<feature type="active site" description="Proton donor" evidence="1">
    <location>
        <position position="264"/>
    </location>
</feature>
<feature type="binding site" evidence="1">
    <location>
        <position position="78"/>
    </location>
    <ligand>
        <name>Zn(2+)</name>
        <dbReference type="ChEBI" id="CHEBI:29105"/>
    </ligand>
</feature>
<feature type="binding site" evidence="1">
    <location>
        <position position="237"/>
    </location>
    <ligand>
        <name>Zn(2+)</name>
        <dbReference type="ChEBI" id="CHEBI:29105"/>
    </ligand>
</feature>
<feature type="binding site" evidence="1">
    <location>
        <position position="241"/>
    </location>
    <ligand>
        <name>Zn(2+)</name>
        <dbReference type="ChEBI" id="CHEBI:29105"/>
    </ligand>
</feature>
<dbReference type="EC" id="3.5.1.108" evidence="1"/>
<dbReference type="EMBL" id="CP000655">
    <property type="protein sequence ID" value="ABP33395.1"/>
    <property type="molecule type" value="Genomic_DNA"/>
</dbReference>
<dbReference type="RefSeq" id="WP_011902020.1">
    <property type="nucleotide sequence ID" value="NC_009379.1"/>
</dbReference>
<dbReference type="SMR" id="A4SV81"/>
<dbReference type="GeneID" id="31480523"/>
<dbReference type="KEGG" id="pnu:Pnuc_0174"/>
<dbReference type="eggNOG" id="COG0774">
    <property type="taxonomic scope" value="Bacteria"/>
</dbReference>
<dbReference type="HOGENOM" id="CLU_046528_1_0_4"/>
<dbReference type="UniPathway" id="UPA00359">
    <property type="reaction ID" value="UER00478"/>
</dbReference>
<dbReference type="Proteomes" id="UP000000231">
    <property type="component" value="Chromosome"/>
</dbReference>
<dbReference type="GO" id="GO:0016020">
    <property type="term" value="C:membrane"/>
    <property type="evidence" value="ECO:0007669"/>
    <property type="project" value="GOC"/>
</dbReference>
<dbReference type="GO" id="GO:0046872">
    <property type="term" value="F:metal ion binding"/>
    <property type="evidence" value="ECO:0007669"/>
    <property type="project" value="UniProtKB-KW"/>
</dbReference>
<dbReference type="GO" id="GO:0103117">
    <property type="term" value="F:UDP-3-O-acyl-N-acetylglucosamine deacetylase activity"/>
    <property type="evidence" value="ECO:0007669"/>
    <property type="project" value="UniProtKB-UniRule"/>
</dbReference>
<dbReference type="GO" id="GO:0009245">
    <property type="term" value="P:lipid A biosynthetic process"/>
    <property type="evidence" value="ECO:0007669"/>
    <property type="project" value="UniProtKB-UniRule"/>
</dbReference>
<dbReference type="Gene3D" id="3.30.230.20">
    <property type="entry name" value="lpxc deacetylase, domain 1"/>
    <property type="match status" value="1"/>
</dbReference>
<dbReference type="Gene3D" id="3.30.1700.10">
    <property type="entry name" value="lpxc deacetylase, domain 2"/>
    <property type="match status" value="1"/>
</dbReference>
<dbReference type="HAMAP" id="MF_00388">
    <property type="entry name" value="LpxC"/>
    <property type="match status" value="1"/>
</dbReference>
<dbReference type="InterPro" id="IPR020568">
    <property type="entry name" value="Ribosomal_Su5_D2-typ_SF"/>
</dbReference>
<dbReference type="InterPro" id="IPR004463">
    <property type="entry name" value="UDP-acyl_GlcNac_deAcase"/>
</dbReference>
<dbReference type="InterPro" id="IPR011334">
    <property type="entry name" value="UDP-acyl_GlcNac_deAcase_C"/>
</dbReference>
<dbReference type="InterPro" id="IPR015870">
    <property type="entry name" value="UDP-acyl_N-AcGlcN_deAcase_N"/>
</dbReference>
<dbReference type="NCBIfam" id="TIGR00325">
    <property type="entry name" value="lpxC"/>
    <property type="match status" value="1"/>
</dbReference>
<dbReference type="PANTHER" id="PTHR33694">
    <property type="entry name" value="UDP-3-O-ACYL-N-ACETYLGLUCOSAMINE DEACETYLASE 1, MITOCHONDRIAL-RELATED"/>
    <property type="match status" value="1"/>
</dbReference>
<dbReference type="PANTHER" id="PTHR33694:SF1">
    <property type="entry name" value="UDP-3-O-ACYL-N-ACETYLGLUCOSAMINE DEACETYLASE 1, MITOCHONDRIAL-RELATED"/>
    <property type="match status" value="1"/>
</dbReference>
<dbReference type="Pfam" id="PF03331">
    <property type="entry name" value="LpxC"/>
    <property type="match status" value="1"/>
</dbReference>
<dbReference type="SUPFAM" id="SSF54211">
    <property type="entry name" value="Ribosomal protein S5 domain 2-like"/>
    <property type="match status" value="2"/>
</dbReference>
<comment type="function">
    <text evidence="1">Catalyzes the hydrolysis of UDP-3-O-myristoyl-N-acetylglucosamine to form UDP-3-O-myristoylglucosamine and acetate, the committed step in lipid A biosynthesis.</text>
</comment>
<comment type="catalytic activity">
    <reaction evidence="1">
        <text>a UDP-3-O-[(3R)-3-hydroxyacyl]-N-acetyl-alpha-D-glucosamine + H2O = a UDP-3-O-[(3R)-3-hydroxyacyl]-alpha-D-glucosamine + acetate</text>
        <dbReference type="Rhea" id="RHEA:67816"/>
        <dbReference type="ChEBI" id="CHEBI:15377"/>
        <dbReference type="ChEBI" id="CHEBI:30089"/>
        <dbReference type="ChEBI" id="CHEBI:137740"/>
        <dbReference type="ChEBI" id="CHEBI:173225"/>
        <dbReference type="EC" id="3.5.1.108"/>
    </reaction>
</comment>
<comment type="cofactor">
    <cofactor evidence="1">
        <name>Zn(2+)</name>
        <dbReference type="ChEBI" id="CHEBI:29105"/>
    </cofactor>
</comment>
<comment type="pathway">
    <text evidence="1">Glycolipid biosynthesis; lipid IV(A) biosynthesis; lipid IV(A) from (3R)-3-hydroxytetradecanoyl-[acyl-carrier-protein] and UDP-N-acetyl-alpha-D-glucosamine: step 2/6.</text>
</comment>
<comment type="similarity">
    <text evidence="1">Belongs to the LpxC family.</text>
</comment>
<keyword id="KW-0378">Hydrolase</keyword>
<keyword id="KW-0441">Lipid A biosynthesis</keyword>
<keyword id="KW-0444">Lipid biosynthesis</keyword>
<keyword id="KW-0443">Lipid metabolism</keyword>
<keyword id="KW-0479">Metal-binding</keyword>
<keyword id="KW-1185">Reference proteome</keyword>
<keyword id="KW-0862">Zinc</keyword>
<protein>
    <recommendedName>
        <fullName evidence="1">UDP-3-O-acyl-N-acetylglucosamine deacetylase</fullName>
        <shortName evidence="1">UDP-3-O-acyl-GlcNAc deacetylase</shortName>
        <ecNumber evidence="1">3.5.1.108</ecNumber>
    </recommendedName>
    <alternativeName>
        <fullName evidence="1">UDP-3-O-[R-3-hydroxymyristoyl]-N-acetylglucosamine deacetylase</fullName>
    </alternativeName>
</protein>
<gene>
    <name evidence="1" type="primary">lpxC</name>
    <name type="ordered locus">Pnuc_0174</name>
</gene>
<reference key="1">
    <citation type="journal article" date="2012" name="Stand. Genomic Sci.">
        <title>Complete genome sequence of Polynucleobacter necessarius subsp. asymbioticus type strain (QLW-P1DMWA-1(T)).</title>
        <authorList>
            <person name="Meincke L."/>
            <person name="Copeland A."/>
            <person name="Lapidus A."/>
            <person name="Lucas S."/>
            <person name="Berry K.W."/>
            <person name="Del Rio T.G."/>
            <person name="Hammon N."/>
            <person name="Dalin E."/>
            <person name="Tice H."/>
            <person name="Pitluck S."/>
            <person name="Richardson P."/>
            <person name="Bruce D."/>
            <person name="Goodwin L."/>
            <person name="Han C."/>
            <person name="Tapia R."/>
            <person name="Detter J.C."/>
            <person name="Schmutz J."/>
            <person name="Brettin T."/>
            <person name="Larimer F."/>
            <person name="Land M."/>
            <person name="Hauser L."/>
            <person name="Kyrpides N.C."/>
            <person name="Ivanova N."/>
            <person name="Goker M."/>
            <person name="Woyke T."/>
            <person name="Wu Q.L."/>
            <person name="Pockl M."/>
            <person name="Hahn M.W."/>
            <person name="Klenk H.P."/>
        </authorList>
    </citation>
    <scope>NUCLEOTIDE SEQUENCE [LARGE SCALE GENOMIC DNA]</scope>
    <source>
        <strain>DSM 18221 / CIP 109841 / QLW-P1DMWA-1</strain>
    </source>
</reference>
<organism>
    <name type="scientific">Polynucleobacter asymbioticus (strain DSM 18221 / CIP 109841 / QLW-P1DMWA-1)</name>
    <name type="common">Polynucleobacter necessarius subsp. asymbioticus</name>
    <dbReference type="NCBI Taxonomy" id="312153"/>
    <lineage>
        <taxon>Bacteria</taxon>
        <taxon>Pseudomonadati</taxon>
        <taxon>Pseudomonadota</taxon>
        <taxon>Betaproteobacteria</taxon>
        <taxon>Burkholderiales</taxon>
        <taxon>Burkholderiaceae</taxon>
        <taxon>Polynucleobacter</taxon>
    </lineage>
</organism>
<accession>A4SV81</accession>
<name>LPXC_POLAQ</name>